<comment type="similarity">
    <text evidence="1">Belongs to the universal ribosomal protein uL14 family.</text>
</comment>
<organism>
    <name type="scientific">Nicotiana tabacum</name>
    <name type="common">Common tobacco</name>
    <dbReference type="NCBI Taxonomy" id="4097"/>
    <lineage>
        <taxon>Eukaryota</taxon>
        <taxon>Viridiplantae</taxon>
        <taxon>Streptophyta</taxon>
        <taxon>Embryophyta</taxon>
        <taxon>Tracheophyta</taxon>
        <taxon>Spermatophyta</taxon>
        <taxon>Magnoliopsida</taxon>
        <taxon>eudicotyledons</taxon>
        <taxon>Gunneridae</taxon>
        <taxon>Pentapetalae</taxon>
        <taxon>asterids</taxon>
        <taxon>lamiids</taxon>
        <taxon>Solanales</taxon>
        <taxon>Solanaceae</taxon>
        <taxon>Nicotianoideae</taxon>
        <taxon>Nicotianeae</taxon>
        <taxon>Nicotiana</taxon>
    </lineage>
</organism>
<accession>Q07760</accession>
<reference key="1">
    <citation type="journal article" date="1993" name="Plant Physiol.">
        <title>Nucleotide and protein sequences of 60S ribosomal protein L17 from tobacco (Nicotiana tabacum L.).</title>
        <authorList>
            <person name="Gao J."/>
            <person name="Kim S.R."/>
            <person name="Lee J.M."/>
            <person name="An G."/>
        </authorList>
    </citation>
    <scope>NUCLEOTIDE SEQUENCE [MRNA]</scope>
</reference>
<gene>
    <name type="primary">RPL23</name>
</gene>
<feature type="chain" id="PRO_0000128626" description="Large ribosomal subunit protein uL14">
    <location>
        <begin position="1"/>
        <end position="140"/>
    </location>
</feature>
<proteinExistence type="evidence at transcript level"/>
<dbReference type="EMBL" id="L18915">
    <property type="protein sequence ID" value="AAA34113.1"/>
    <property type="molecule type" value="mRNA"/>
</dbReference>
<dbReference type="PIR" id="T03693">
    <property type="entry name" value="T03693"/>
</dbReference>
<dbReference type="SMR" id="Q07760"/>
<dbReference type="STRING" id="4097.Q07760"/>
<dbReference type="PaxDb" id="4097-Q07760"/>
<dbReference type="Proteomes" id="UP000084051">
    <property type="component" value="Unplaced"/>
</dbReference>
<dbReference type="GO" id="GO:0022625">
    <property type="term" value="C:cytosolic large ribosomal subunit"/>
    <property type="evidence" value="ECO:0000318"/>
    <property type="project" value="GO_Central"/>
</dbReference>
<dbReference type="GO" id="GO:0070180">
    <property type="term" value="F:large ribosomal subunit rRNA binding"/>
    <property type="evidence" value="ECO:0000318"/>
    <property type="project" value="GO_Central"/>
</dbReference>
<dbReference type="GO" id="GO:0003735">
    <property type="term" value="F:structural constituent of ribosome"/>
    <property type="evidence" value="ECO:0000318"/>
    <property type="project" value="GO_Central"/>
</dbReference>
<dbReference type="GO" id="GO:0006412">
    <property type="term" value="P:translation"/>
    <property type="evidence" value="ECO:0007669"/>
    <property type="project" value="InterPro"/>
</dbReference>
<dbReference type="CDD" id="cd00337">
    <property type="entry name" value="Ribosomal_uL14"/>
    <property type="match status" value="1"/>
</dbReference>
<dbReference type="FunFam" id="2.40.150.20:FF:000003">
    <property type="entry name" value="60S ribosomal protein L23"/>
    <property type="match status" value="1"/>
</dbReference>
<dbReference type="Gene3D" id="2.40.150.20">
    <property type="entry name" value="Ribosomal protein L14"/>
    <property type="match status" value="1"/>
</dbReference>
<dbReference type="HAMAP" id="MF_01367">
    <property type="entry name" value="Ribosomal_uL14"/>
    <property type="match status" value="1"/>
</dbReference>
<dbReference type="InterPro" id="IPR000218">
    <property type="entry name" value="Ribosomal_uL14"/>
</dbReference>
<dbReference type="InterPro" id="IPR019972">
    <property type="entry name" value="Ribosomal_uL14_CS"/>
</dbReference>
<dbReference type="InterPro" id="IPR036853">
    <property type="entry name" value="Ribosomal_uL14_sf"/>
</dbReference>
<dbReference type="NCBIfam" id="NF006344">
    <property type="entry name" value="PRK08571.1"/>
    <property type="match status" value="1"/>
</dbReference>
<dbReference type="PANTHER" id="PTHR11761">
    <property type="entry name" value="50S/60S RIBOSOMAL PROTEIN L14/L23"/>
    <property type="match status" value="1"/>
</dbReference>
<dbReference type="PANTHER" id="PTHR11761:SF44">
    <property type="entry name" value="LARGE RIBOSOMAL SUBUNIT PROTEIN UL14"/>
    <property type="match status" value="1"/>
</dbReference>
<dbReference type="Pfam" id="PF00238">
    <property type="entry name" value="Ribosomal_L14"/>
    <property type="match status" value="1"/>
</dbReference>
<dbReference type="SMART" id="SM01374">
    <property type="entry name" value="Ribosomal_L14"/>
    <property type="match status" value="1"/>
</dbReference>
<dbReference type="SUPFAM" id="SSF50193">
    <property type="entry name" value="Ribosomal protein L14"/>
    <property type="match status" value="1"/>
</dbReference>
<dbReference type="PROSITE" id="PS00049">
    <property type="entry name" value="RIBOSOMAL_L14"/>
    <property type="match status" value="1"/>
</dbReference>
<keyword id="KW-1185">Reference proteome</keyword>
<keyword id="KW-0687">Ribonucleoprotein</keyword>
<keyword id="KW-0689">Ribosomal protein</keyword>
<protein>
    <recommendedName>
        <fullName evidence="1">Large ribosomal subunit protein uL14</fullName>
    </recommendedName>
    <alternativeName>
        <fullName>60S ribosomal protein L23</fullName>
    </alternativeName>
</protein>
<sequence length="140" mass="14989">MSKRGRGGSAGNKFRMSLGLPVAATINCADNTGAKNLYIISVKGIKGRLNRLPSACVGDMVMATVKKGKPDLRKKVMPAVVVRQRKPWRRKDGVFMYFEDNAGVIVNAKGEMKGSAITGPIGKECADLWPRIASAANAIV</sequence>
<evidence type="ECO:0000305" key="1"/>
<name>RL23_TOBAC</name>